<proteinExistence type="evidence at protein level"/>
<name>COPD_BOVIN</name>
<gene>
    <name type="primary">ARCN1</name>
    <name type="synonym">COPD</name>
</gene>
<accession>P53619</accession>
<reference key="1">
    <citation type="journal article" date="1996" name="J. Cell Biol.">
        <title>Architecture of coatomer: molecular characterization of delta-COP and protein interactions within the complex.</title>
        <authorList>
            <person name="Faulstich D."/>
            <person name="Auerbach S."/>
            <person name="Orci L."/>
            <person name="Ravazzola M."/>
            <person name="Wegehingel S."/>
            <person name="Lottspeich F."/>
            <person name="Stenbeck G."/>
            <person name="Harter C."/>
            <person name="Wieland F.T."/>
            <person name="Tschochner H."/>
        </authorList>
    </citation>
    <scope>NUCLEOTIDE SEQUENCE [MRNA] OF 2-511</scope>
    <source>
        <tissue>Brain</tissue>
    </source>
</reference>
<organism>
    <name type="scientific">Bos taurus</name>
    <name type="common">Bovine</name>
    <dbReference type="NCBI Taxonomy" id="9913"/>
    <lineage>
        <taxon>Eukaryota</taxon>
        <taxon>Metazoa</taxon>
        <taxon>Chordata</taxon>
        <taxon>Craniata</taxon>
        <taxon>Vertebrata</taxon>
        <taxon>Euteleostomi</taxon>
        <taxon>Mammalia</taxon>
        <taxon>Eutheria</taxon>
        <taxon>Laurasiatheria</taxon>
        <taxon>Artiodactyla</taxon>
        <taxon>Ruminantia</taxon>
        <taxon>Pecora</taxon>
        <taxon>Bovidae</taxon>
        <taxon>Bovinae</taxon>
        <taxon>Bos</taxon>
    </lineage>
</organism>
<feature type="chain" id="PRO_0000193840" description="Coatomer subunit delta">
    <location>
        <begin position="1"/>
        <end position="511"/>
    </location>
</feature>
<feature type="domain" description="MHD" evidence="4">
    <location>
        <begin position="271"/>
        <end position="511"/>
    </location>
</feature>
<feature type="region of interest" description="Disordered" evidence="5">
    <location>
        <begin position="168"/>
        <end position="196"/>
    </location>
</feature>
<feature type="compositionally biased region" description="Basic and acidic residues" evidence="5">
    <location>
        <begin position="168"/>
        <end position="177"/>
    </location>
</feature>
<feature type="modified residue" description="Phosphoserine" evidence="2">
    <location>
        <position position="223"/>
    </location>
</feature>
<feature type="modified residue" description="N6-acetyllysine" evidence="2">
    <location>
        <position position="233"/>
    </location>
</feature>
<feature type="modified residue" description="N6-acetyllysine" evidence="3">
    <location>
        <position position="241"/>
    </location>
</feature>
<feature type="modified residue" description="Phosphoserine" evidence="2">
    <location>
        <position position="244"/>
    </location>
</feature>
<feature type="modified residue" description="N6-acetyllysine" evidence="2">
    <location>
        <position position="309"/>
    </location>
</feature>
<feature type="modified residue" description="N6-acetyllysine" evidence="3">
    <location>
        <position position="351"/>
    </location>
</feature>
<feature type="modified residue" description="Phosphoserine" evidence="2">
    <location>
        <position position="493"/>
    </location>
</feature>
<feature type="helix" evidence="7">
    <location>
        <begin position="268"/>
        <end position="270"/>
    </location>
</feature>
<feature type="strand" evidence="7">
    <location>
        <begin position="273"/>
        <end position="286"/>
    </location>
</feature>
<feature type="strand" evidence="7">
    <location>
        <begin position="292"/>
        <end position="306"/>
    </location>
</feature>
<feature type="helix" evidence="7">
    <location>
        <begin position="308"/>
        <end position="310"/>
    </location>
</feature>
<feature type="strand" evidence="7">
    <location>
        <begin position="311"/>
        <end position="319"/>
    </location>
</feature>
<feature type="strand" evidence="7">
    <location>
        <begin position="326"/>
        <end position="329"/>
    </location>
</feature>
<feature type="helix" evidence="7">
    <location>
        <begin position="335"/>
        <end position="341"/>
    </location>
</feature>
<feature type="strand" evidence="7">
    <location>
        <begin position="346"/>
        <end position="348"/>
    </location>
</feature>
<feature type="strand" evidence="7">
    <location>
        <begin position="355"/>
        <end position="357"/>
    </location>
</feature>
<feature type="strand" evidence="7">
    <location>
        <begin position="359"/>
        <end position="368"/>
    </location>
</feature>
<feature type="helix" evidence="7">
    <location>
        <begin position="371"/>
        <end position="373"/>
    </location>
</feature>
<feature type="strand" evidence="7">
    <location>
        <begin position="375"/>
        <end position="383"/>
    </location>
</feature>
<feature type="strand" evidence="7">
    <location>
        <begin position="389"/>
        <end position="397"/>
    </location>
</feature>
<feature type="strand" evidence="7">
    <location>
        <begin position="404"/>
        <end position="412"/>
    </location>
</feature>
<feature type="strand" evidence="7">
    <location>
        <begin position="415"/>
        <end position="417"/>
    </location>
</feature>
<feature type="strand" evidence="7">
    <location>
        <begin position="421"/>
        <end position="432"/>
    </location>
</feature>
<feature type="turn" evidence="7">
    <location>
        <begin position="433"/>
        <end position="436"/>
    </location>
</feature>
<feature type="strand" evidence="7">
    <location>
        <begin position="437"/>
        <end position="441"/>
    </location>
</feature>
<feature type="strand" evidence="7">
    <location>
        <begin position="451"/>
        <end position="459"/>
    </location>
</feature>
<feature type="helix" evidence="7">
    <location>
        <begin position="462"/>
        <end position="465"/>
    </location>
</feature>
<feature type="strand" evidence="7">
    <location>
        <begin position="467"/>
        <end position="476"/>
    </location>
</feature>
<feature type="strand" evidence="7">
    <location>
        <begin position="481"/>
        <end position="488"/>
    </location>
</feature>
<feature type="turn" evidence="7">
    <location>
        <begin position="489"/>
        <end position="491"/>
    </location>
</feature>
<feature type="strand" evidence="7">
    <location>
        <begin position="498"/>
        <end position="510"/>
    </location>
</feature>
<keyword id="KW-0002">3D-structure</keyword>
<keyword id="KW-0007">Acetylation</keyword>
<keyword id="KW-0963">Cytoplasm</keyword>
<keyword id="KW-0968">Cytoplasmic vesicle</keyword>
<keyword id="KW-0931">ER-Golgi transport</keyword>
<keyword id="KW-0333">Golgi apparatus</keyword>
<keyword id="KW-0472">Membrane</keyword>
<keyword id="KW-0597">Phosphoprotein</keyword>
<keyword id="KW-0653">Protein transport</keyword>
<keyword id="KW-1185">Reference proteome</keyword>
<keyword id="KW-0813">Transport</keyword>
<dbReference type="EMBL" id="X94265">
    <property type="protein sequence ID" value="CAA63941.1"/>
    <property type="molecule type" value="mRNA"/>
</dbReference>
<dbReference type="RefSeq" id="NP_001181942.1">
    <property type="nucleotide sequence ID" value="NM_001195013.1"/>
</dbReference>
<dbReference type="PDB" id="4O8Q">
    <property type="method" value="X-ray"/>
    <property type="resolution" value="2.15 A"/>
    <property type="chains" value="A/B=268-511"/>
</dbReference>
<dbReference type="PDBsum" id="4O8Q"/>
<dbReference type="SMR" id="P53619"/>
<dbReference type="FunCoup" id="P53619">
    <property type="interactions" value="4466"/>
</dbReference>
<dbReference type="IntAct" id="P53619">
    <property type="interactions" value="3"/>
</dbReference>
<dbReference type="STRING" id="9913.ENSBTAP00000008799"/>
<dbReference type="PaxDb" id="9913-ENSBTAP00000008799"/>
<dbReference type="PeptideAtlas" id="P53619"/>
<dbReference type="Ensembl" id="ENSBTAT00000008799.5">
    <property type="protein sequence ID" value="ENSBTAP00000008799.4"/>
    <property type="gene ID" value="ENSBTAG00000006690.6"/>
</dbReference>
<dbReference type="GeneID" id="533078"/>
<dbReference type="KEGG" id="bta:533078"/>
<dbReference type="CTD" id="372"/>
<dbReference type="VEuPathDB" id="HostDB:ENSBTAG00000006690"/>
<dbReference type="VGNC" id="VGNC:26057">
    <property type="gene designation" value="ARCN1"/>
</dbReference>
<dbReference type="eggNOG" id="KOG2635">
    <property type="taxonomic scope" value="Eukaryota"/>
</dbReference>
<dbReference type="GeneTree" id="ENSGT00390000017207"/>
<dbReference type="HOGENOM" id="CLU_019988_3_0_1"/>
<dbReference type="InParanoid" id="P53619"/>
<dbReference type="OMA" id="VQFRTHP"/>
<dbReference type="OrthoDB" id="10266042at2759"/>
<dbReference type="TreeFam" id="TF105760"/>
<dbReference type="Reactome" id="R-BTA-6807878">
    <property type="pathway name" value="COPI-mediated anterograde transport"/>
</dbReference>
<dbReference type="Reactome" id="R-BTA-6811434">
    <property type="pathway name" value="COPI-dependent Golgi-to-ER retrograde traffic"/>
</dbReference>
<dbReference type="EvolutionaryTrace" id="P53619"/>
<dbReference type="Proteomes" id="UP000009136">
    <property type="component" value="Chromosome 15"/>
</dbReference>
<dbReference type="Bgee" id="ENSBTAG00000006690">
    <property type="expression patterns" value="Expressed in saliva-secreting gland and 109 other cell types or tissues"/>
</dbReference>
<dbReference type="GO" id="GO:0030126">
    <property type="term" value="C:COPI vesicle coat"/>
    <property type="evidence" value="ECO:0000314"/>
    <property type="project" value="UniProtKB"/>
</dbReference>
<dbReference type="GO" id="GO:0005783">
    <property type="term" value="C:endoplasmic reticulum"/>
    <property type="evidence" value="ECO:0007669"/>
    <property type="project" value="Ensembl"/>
</dbReference>
<dbReference type="GO" id="GO:0000139">
    <property type="term" value="C:Golgi membrane"/>
    <property type="evidence" value="ECO:0007669"/>
    <property type="project" value="UniProtKB-SubCell"/>
</dbReference>
<dbReference type="GO" id="GO:0008344">
    <property type="term" value="P:adult locomotory behavior"/>
    <property type="evidence" value="ECO:0007669"/>
    <property type="project" value="Ensembl"/>
</dbReference>
<dbReference type="GO" id="GO:0021691">
    <property type="term" value="P:cerebellar Purkinje cell layer maturation"/>
    <property type="evidence" value="ECO:0007669"/>
    <property type="project" value="Ensembl"/>
</dbReference>
<dbReference type="GO" id="GO:0006888">
    <property type="term" value="P:endoplasmic reticulum to Golgi vesicle-mediated transport"/>
    <property type="evidence" value="ECO:0000318"/>
    <property type="project" value="GO_Central"/>
</dbReference>
<dbReference type="GO" id="GO:0051645">
    <property type="term" value="P:Golgi localization"/>
    <property type="evidence" value="ECO:0000318"/>
    <property type="project" value="GO_Central"/>
</dbReference>
<dbReference type="GO" id="GO:0006891">
    <property type="term" value="P:intra-Golgi vesicle-mediated transport"/>
    <property type="evidence" value="ECO:0000304"/>
    <property type="project" value="UniProtKB"/>
</dbReference>
<dbReference type="GO" id="GO:0043473">
    <property type="term" value="P:pigmentation"/>
    <property type="evidence" value="ECO:0007669"/>
    <property type="project" value="Ensembl"/>
</dbReference>
<dbReference type="GO" id="GO:0015031">
    <property type="term" value="P:protein transport"/>
    <property type="evidence" value="ECO:0007669"/>
    <property type="project" value="UniProtKB-KW"/>
</dbReference>
<dbReference type="GO" id="GO:0006890">
    <property type="term" value="P:retrograde vesicle-mediated transport, Golgi to endoplasmic reticulum"/>
    <property type="evidence" value="ECO:0000318"/>
    <property type="project" value="GO_Central"/>
</dbReference>
<dbReference type="CDD" id="cd09254">
    <property type="entry name" value="AP_delta-COPI_MHD"/>
    <property type="match status" value="1"/>
</dbReference>
<dbReference type="CDD" id="cd14830">
    <property type="entry name" value="Delta_COP_N"/>
    <property type="match status" value="1"/>
</dbReference>
<dbReference type="FunFam" id="2.60.40.1170:FF:000007">
    <property type="entry name" value="Coatomer subunit delta"/>
    <property type="match status" value="1"/>
</dbReference>
<dbReference type="FunFam" id="2.60.40.1170:FF:000011">
    <property type="entry name" value="Coatomer subunit delta"/>
    <property type="match status" value="1"/>
</dbReference>
<dbReference type="FunFam" id="3.30.450.60:FF:000003">
    <property type="entry name" value="Coatomer subunit delta"/>
    <property type="match status" value="1"/>
</dbReference>
<dbReference type="Gene3D" id="3.30.450.60">
    <property type="match status" value="1"/>
</dbReference>
<dbReference type="Gene3D" id="2.60.40.1170">
    <property type="entry name" value="Mu homology domain, subdomain B"/>
    <property type="match status" value="2"/>
</dbReference>
<dbReference type="InterPro" id="IPR036168">
    <property type="entry name" value="AP2_Mu_C_sf"/>
</dbReference>
<dbReference type="InterPro" id="IPR022775">
    <property type="entry name" value="AP_mu_sigma_su"/>
</dbReference>
<dbReference type="InterPro" id="IPR027059">
    <property type="entry name" value="Coatomer_dsu"/>
</dbReference>
<dbReference type="InterPro" id="IPR011012">
    <property type="entry name" value="Longin-like_dom_sf"/>
</dbReference>
<dbReference type="InterPro" id="IPR028565">
    <property type="entry name" value="MHD"/>
</dbReference>
<dbReference type="PANTHER" id="PTHR10121">
    <property type="entry name" value="COATOMER SUBUNIT DELTA"/>
    <property type="match status" value="1"/>
</dbReference>
<dbReference type="PANTHER" id="PTHR10121:SF0">
    <property type="entry name" value="COATOMER SUBUNIT DELTA"/>
    <property type="match status" value="1"/>
</dbReference>
<dbReference type="Pfam" id="PF00928">
    <property type="entry name" value="Adap_comp_sub"/>
    <property type="match status" value="1"/>
</dbReference>
<dbReference type="Pfam" id="PF01217">
    <property type="entry name" value="Clat_adaptor_s"/>
    <property type="match status" value="1"/>
</dbReference>
<dbReference type="SUPFAM" id="SSF49447">
    <property type="entry name" value="Second domain of Mu2 adaptin subunit (ap50) of ap2 adaptor"/>
    <property type="match status" value="1"/>
</dbReference>
<dbReference type="SUPFAM" id="SSF64356">
    <property type="entry name" value="SNARE-like"/>
    <property type="match status" value="1"/>
</dbReference>
<dbReference type="PROSITE" id="PS51072">
    <property type="entry name" value="MHD"/>
    <property type="match status" value="1"/>
</dbReference>
<comment type="function">
    <text evidence="1">The coatomer is a cytosolic protein complex that binds to dilysine motifs and reversibly associates with Golgi non-clathrin-coated vesicles, which further mediate biosynthetic protein transport from the ER, via the Golgi up to the trans Golgi network. Coatomer complex is required for budding from Golgi membranes, and is essential for the retrograde Golgi-to-ER transport of dilysine-tagged proteins. In mammals, the coatomer can only be recruited by membranes associated to ADP-ribosylation factors (ARFs), which are small GTP-binding proteins; the complex also influences the Golgi structural integrity, as well as the processing, activity, and endocytic recycling of LDL receptors (By similarity).</text>
</comment>
<comment type="subunit">
    <text>Oligomeric complex that consists of at least the alpha, beta, beta', gamma, delta, epsilon and zeta subunits.</text>
</comment>
<comment type="interaction">
    <interactant intactId="EBI-620432">
        <id>P53619</id>
    </interactant>
    <interactant intactId="EBI-620488">
        <id>P23514</id>
        <label>Copb1</label>
    </interactant>
    <organismsDiffer>true</organismsDiffer>
    <experiments>3</experiments>
</comment>
<comment type="subcellular location">
    <subcellularLocation>
        <location evidence="1">Cytoplasm</location>
    </subcellularLocation>
    <subcellularLocation>
        <location evidence="1">Golgi apparatus membrane</location>
        <topology evidence="1">Peripheral membrane protein</topology>
        <orientation evidence="1">Cytoplasmic side</orientation>
    </subcellularLocation>
    <subcellularLocation>
        <location evidence="1">Cytoplasmic vesicle</location>
        <location evidence="1">COPI-coated vesicle membrane</location>
        <topology evidence="1">Peripheral membrane protein</topology>
        <orientation evidence="1">Cytoplasmic side</orientation>
    </subcellularLocation>
    <text evidence="1">The coatomer is cytoplasmic or polymerized on the cytoplasmic side of the Golgi, as well as on the vesicles/buds originating from it.</text>
</comment>
<comment type="tissue specificity">
    <text>Ubiquitously expressed.</text>
</comment>
<comment type="similarity">
    <text evidence="6">Belongs to the adaptor complexes medium subunit family. Delta-COP subfamily.</text>
</comment>
<evidence type="ECO:0000250" key="1"/>
<evidence type="ECO:0000250" key="2">
    <source>
        <dbReference type="UniProtKB" id="P48444"/>
    </source>
</evidence>
<evidence type="ECO:0000250" key="3">
    <source>
        <dbReference type="UniProtKB" id="Q5XJY5"/>
    </source>
</evidence>
<evidence type="ECO:0000255" key="4">
    <source>
        <dbReference type="PROSITE-ProRule" id="PRU00404"/>
    </source>
</evidence>
<evidence type="ECO:0000256" key="5">
    <source>
        <dbReference type="SAM" id="MobiDB-lite"/>
    </source>
</evidence>
<evidence type="ECO:0000305" key="6"/>
<evidence type="ECO:0007829" key="7">
    <source>
        <dbReference type="PDB" id="4O8Q"/>
    </source>
</evidence>
<protein>
    <recommendedName>
        <fullName>Coatomer subunit delta</fullName>
    </recommendedName>
    <alternativeName>
        <fullName>Archain</fullName>
    </alternativeName>
    <alternativeName>
        <fullName>Delta-coat protein</fullName>
        <shortName>Delta-COP</shortName>
    </alternativeName>
</protein>
<sequence>MVLLAAAVCTKAGKAIVSRQFVEMTRTRIEGLLAAFPKLMNTGKQHTFVETESVRYVYQPMEKLYMVLITTKNSNILEDLETLRLFSRVIPEYCRALEENEISEHCFDLIFAFDEIVALGYRENVNLAQIRTFTEMDSHEEKVFRAVRETQEREAKAEMRRKAKELQQARRDAERQGKKAPGFGGFGSSTVSGGSTTSMITETIIETDKPKVAPAPARPSGPSKALKLGAKGKEVDNFVDKLKSEGENIISSNMGKRTSEATKVHAPPINMESVHMKIEEKITLTCGRDGGLQNMELHGMIMLRISDDKFGRIRLHVENEDKKGVQLQTHPNVDKKLFTAESLIGLKNPEKSFPVNSDVGVLKWRLQTTEESFIPLTINCWPSESGNGCDVNIEYELQEDNLELNDVVITIPLPSGVGAPVIGEIDGEYRHDSRRNTLEWCLPVIDAKNKSGSLEFSIAGQPNDFFPVQVSFISKKNYCNIQVTKVTQVDGNSPVRFSTETTFLVDKYEIL</sequence>